<proteinExistence type="evidence at protein level"/>
<keyword id="KW-0238">DNA-binding</keyword>
<keyword id="KW-0597">Phosphoprotein</keyword>
<keyword id="KW-1185">Reference proteome</keyword>
<keyword id="KW-0804">Transcription</keyword>
<keyword id="KW-0805">Transcription regulation</keyword>
<reference key="1">
    <citation type="journal article" date="1997" name="Science">
        <title>The complete genome sequence of Escherichia coli K-12.</title>
        <authorList>
            <person name="Blattner F.R."/>
            <person name="Plunkett G. III"/>
            <person name="Bloch C.A."/>
            <person name="Perna N.T."/>
            <person name="Burland V."/>
            <person name="Riley M."/>
            <person name="Collado-Vides J."/>
            <person name="Glasner J.D."/>
            <person name="Rode C.K."/>
            <person name="Mayhew G.F."/>
            <person name="Gregor J."/>
            <person name="Davis N.W."/>
            <person name="Kirkpatrick H.A."/>
            <person name="Goeden M.A."/>
            <person name="Rose D.J."/>
            <person name="Mau B."/>
            <person name="Shao Y."/>
        </authorList>
    </citation>
    <scope>NUCLEOTIDE SEQUENCE [LARGE SCALE GENOMIC DNA]</scope>
    <source>
        <strain>K12 / MG1655 / ATCC 47076</strain>
    </source>
</reference>
<reference key="2">
    <citation type="journal article" date="2006" name="Mol. Syst. Biol.">
        <title>Highly accurate genome sequences of Escherichia coli K-12 strains MG1655 and W3110.</title>
        <authorList>
            <person name="Hayashi K."/>
            <person name="Morooka N."/>
            <person name="Yamamoto Y."/>
            <person name="Fujita K."/>
            <person name="Isono K."/>
            <person name="Choi S."/>
            <person name="Ohtsubo E."/>
            <person name="Baba T."/>
            <person name="Wanner B.L."/>
            <person name="Mori H."/>
            <person name="Horiuchi T."/>
        </authorList>
    </citation>
    <scope>NUCLEOTIDE SEQUENCE [LARGE SCALE GENOMIC DNA]</scope>
    <source>
        <strain>K12 / W3110 / ATCC 27325 / DSM 5911</strain>
    </source>
</reference>
<reference key="3">
    <citation type="journal article" date="2005" name="J. Biol. Chem.">
        <title>Functional characterization in vitro of all two-component signal transduction systems from Escherichia coli.</title>
        <authorList>
            <person name="Yamamoto K."/>
            <person name="Hirao K."/>
            <person name="Oshima T."/>
            <person name="Aiba H."/>
            <person name="Utsumi R."/>
            <person name="Ishihama A."/>
        </authorList>
    </citation>
    <scope>PHOSPHORYLATION</scope>
    <source>
        <strain>K12 / W3110 / ATCC 27325 / DSM 5911</strain>
    </source>
</reference>
<gene>
    <name type="primary">ygeK</name>
    <name type="synonym">ygeL</name>
    <name type="ordered locus">b2856</name>
    <name type="ordered locus">JW5458/JW2824</name>
    <name type="ORF">b2855</name>
</gene>
<dbReference type="EMBL" id="U28375">
    <property type="protein sequence ID" value="AAA83037.1"/>
    <property type="status" value="ALT_INIT"/>
    <property type="molecule type" value="Genomic_DNA"/>
</dbReference>
<dbReference type="EMBL" id="U00096">
    <property type="status" value="NOT_ANNOTATED_CDS"/>
    <property type="molecule type" value="Genomic_DNA"/>
</dbReference>
<dbReference type="EMBL" id="AP009048">
    <property type="protein sequence ID" value="BAE76923.1"/>
    <property type="molecule type" value="Genomic_DNA"/>
</dbReference>
<dbReference type="PIR" id="A65069">
    <property type="entry name" value="A65069"/>
</dbReference>
<dbReference type="PIR" id="H65068">
    <property type="entry name" value="H65068"/>
</dbReference>
<dbReference type="SMR" id="Q46791"/>
<dbReference type="BioGRID" id="4259232">
    <property type="interactions" value="13"/>
</dbReference>
<dbReference type="BioGRID" id="4259233">
    <property type="interactions" value="16"/>
</dbReference>
<dbReference type="FunCoup" id="Q46791">
    <property type="interactions" value="92"/>
</dbReference>
<dbReference type="KEGG" id="ecj:JW5458"/>
<dbReference type="EchoBASE" id="EB2856"/>
<dbReference type="eggNOG" id="COG2197">
    <property type="taxonomic scope" value="Bacteria"/>
</dbReference>
<dbReference type="HOGENOM" id="CLU_000445_90_1_6"/>
<dbReference type="InParanoid" id="Q46791"/>
<dbReference type="OMA" id="THKLGAN"/>
<dbReference type="PhylomeDB" id="Q46791"/>
<dbReference type="Proteomes" id="UP000000625">
    <property type="component" value="Chromosome"/>
</dbReference>
<dbReference type="GO" id="GO:0003677">
    <property type="term" value="F:DNA binding"/>
    <property type="evidence" value="ECO:0007669"/>
    <property type="project" value="UniProtKB-KW"/>
</dbReference>
<dbReference type="GO" id="GO:0000160">
    <property type="term" value="P:phosphorelay signal transduction system"/>
    <property type="evidence" value="ECO:0007669"/>
    <property type="project" value="InterPro"/>
</dbReference>
<dbReference type="GO" id="GO:0006355">
    <property type="term" value="P:regulation of DNA-templated transcription"/>
    <property type="evidence" value="ECO:0007669"/>
    <property type="project" value="InterPro"/>
</dbReference>
<dbReference type="CDD" id="cd06170">
    <property type="entry name" value="LuxR_C_like"/>
    <property type="match status" value="1"/>
</dbReference>
<dbReference type="FunFam" id="1.10.10.10:FF:001399">
    <property type="entry name" value="LuxR family transcriptional regulator"/>
    <property type="match status" value="1"/>
</dbReference>
<dbReference type="Gene3D" id="3.40.50.2300">
    <property type="match status" value="1"/>
</dbReference>
<dbReference type="InterPro" id="IPR011006">
    <property type="entry name" value="CheY-like_superfamily"/>
</dbReference>
<dbReference type="InterPro" id="IPR016032">
    <property type="entry name" value="Sig_transdc_resp-reg_C-effctor"/>
</dbReference>
<dbReference type="InterPro" id="IPR001789">
    <property type="entry name" value="Sig_transdc_resp-reg_receiver"/>
</dbReference>
<dbReference type="InterPro" id="IPR000792">
    <property type="entry name" value="Tscrpt_reg_LuxR_C"/>
</dbReference>
<dbReference type="PANTHER" id="PTHR44688">
    <property type="entry name" value="DNA-BINDING TRANSCRIPTIONAL ACTIVATOR DEVR_DOSR"/>
    <property type="match status" value="1"/>
</dbReference>
<dbReference type="PANTHER" id="PTHR44688:SF16">
    <property type="entry name" value="DNA-BINDING TRANSCRIPTIONAL ACTIVATOR DEVR_DOSR"/>
    <property type="match status" value="1"/>
</dbReference>
<dbReference type="Pfam" id="PF00196">
    <property type="entry name" value="GerE"/>
    <property type="match status" value="1"/>
</dbReference>
<dbReference type="PRINTS" id="PR00038">
    <property type="entry name" value="HTHLUXR"/>
</dbReference>
<dbReference type="SMART" id="SM00421">
    <property type="entry name" value="HTH_LUXR"/>
    <property type="match status" value="1"/>
</dbReference>
<dbReference type="SUPFAM" id="SSF46894">
    <property type="entry name" value="C-terminal effector domain of the bipartite response regulators"/>
    <property type="match status" value="1"/>
</dbReference>
<dbReference type="SUPFAM" id="SSF52172">
    <property type="entry name" value="CheY-like"/>
    <property type="match status" value="1"/>
</dbReference>
<dbReference type="PROSITE" id="PS00622">
    <property type="entry name" value="HTH_LUXR_1"/>
    <property type="match status" value="1"/>
</dbReference>
<dbReference type="PROSITE" id="PS50043">
    <property type="entry name" value="HTH_LUXR_2"/>
    <property type="match status" value="1"/>
</dbReference>
<dbReference type="PROSITE" id="PS50110">
    <property type="entry name" value="RESPONSE_REGULATORY"/>
    <property type="match status" value="1"/>
</dbReference>
<name>YGEK_ECOLI</name>
<organism>
    <name type="scientific">Escherichia coli (strain K12)</name>
    <dbReference type="NCBI Taxonomy" id="83333"/>
    <lineage>
        <taxon>Bacteria</taxon>
        <taxon>Pseudomonadati</taxon>
        <taxon>Pseudomonadota</taxon>
        <taxon>Gammaproteobacteria</taxon>
        <taxon>Enterobacterales</taxon>
        <taxon>Enterobacteriaceae</taxon>
        <taxon>Escherichia</taxon>
    </lineage>
</organism>
<protein>
    <recommendedName>
        <fullName>Uncharacterized response regulatory protein YgeK</fullName>
    </recommendedName>
</protein>
<evidence type="ECO:0000255" key="1">
    <source>
        <dbReference type="PROSITE-ProRule" id="PRU00169"/>
    </source>
</evidence>
<evidence type="ECO:0000255" key="2">
    <source>
        <dbReference type="PROSITE-ProRule" id="PRU00411"/>
    </source>
</evidence>
<evidence type="ECO:0000269" key="3">
    <source>
    </source>
</evidence>
<evidence type="ECO:0000305" key="4"/>
<feature type="chain" id="PRO_0000081366" description="Uncharacterized response regulatory protein YgeK">
    <location>
        <begin position="1"/>
        <end position="147"/>
    </location>
</feature>
<feature type="domain" description="Response regulatory" evidence="1">
    <location>
        <begin position="1"/>
        <end position="59"/>
    </location>
</feature>
<feature type="domain" description="HTH luxR-type" evidence="2">
    <location>
        <begin position="78"/>
        <end position="143"/>
    </location>
</feature>
<feature type="DNA-binding region" description="H-T-H motif" evidence="2">
    <location>
        <begin position="102"/>
        <end position="121"/>
    </location>
</feature>
<accession>Q46791</accession>
<accession>Q2M9Y2</accession>
<accession>Q2M9Y3</accession>
<accession>Q46792</accession>
<comment type="PTM">
    <text evidence="3">Overexpressed protein is phosphorylated in vitro by non-cognate histidine kinases BarA and UhpB.</text>
</comment>
<comment type="miscellaneous">
    <text evidence="4">Lacks the N-terminal receiver domain usually found in response regulators, which is usally phosphorylated by the cognate histidine kinase.</text>
</comment>
<comment type="sequence caution" evidence="4">
    <conflict type="erroneous initiation">
        <sequence resource="EMBL-CDS" id="AAA83037"/>
    </conflict>
    <text>Extended N-terminus.</text>
</comment>
<sequence>MGAELVKWVKSHKIDAHIITFVAKMPYIDSIKLLEAGAKGCVWKTSHPAKLNRAIDSISNGYTYFDSVHMDCEKISSRYSSDNQLTNRESEILQLIADGKTNKEIANFLQLSRKTVETHRLNIMKKLDVHSGIELIKTALRMGVCTI</sequence>